<feature type="chain" id="PRO_0000115311" description="Uncharacterized protein UL19">
    <location>
        <begin position="1"/>
        <end position="98"/>
    </location>
</feature>
<gene>
    <name type="primary">UL19</name>
</gene>
<organism>
    <name type="scientific">Human cytomegalovirus (strain AD169)</name>
    <name type="common">HHV-5</name>
    <name type="synonym">Human herpesvirus 5</name>
    <dbReference type="NCBI Taxonomy" id="10360"/>
    <lineage>
        <taxon>Viruses</taxon>
        <taxon>Duplodnaviria</taxon>
        <taxon>Heunggongvirae</taxon>
        <taxon>Peploviricota</taxon>
        <taxon>Herviviricetes</taxon>
        <taxon>Herpesvirales</taxon>
        <taxon>Orthoherpesviridae</taxon>
        <taxon>Betaherpesvirinae</taxon>
        <taxon>Cytomegalovirus</taxon>
        <taxon>Cytomegalovirus humanbeta5</taxon>
        <taxon>Human cytomegalovirus</taxon>
    </lineage>
</organism>
<name>UL19_HCMVA</name>
<keyword id="KW-1185">Reference proteome</keyword>
<organismHost>
    <name type="scientific">Homo sapiens</name>
    <name type="common">Human</name>
    <dbReference type="NCBI Taxonomy" id="9606"/>
</organismHost>
<evidence type="ECO:0000305" key="1"/>
<comment type="similarity">
    <text evidence="1">Belongs to the HHV-5 UL19 protein family.</text>
</comment>
<proteinExistence type="inferred from homology"/>
<sequence>MTSNALYELFRRRLPRAPVNTVMFLTRRTRDGFCGRLTSIATNSHYTMFVLDHGSVRIERPSQSEVDCASLMETLKRIRLRNSWVASEDELDVSRGDA</sequence>
<accession>P16723</accession>
<accession>Q7M6R4</accession>
<dbReference type="EMBL" id="Y00293">
    <property type="status" value="NOT_ANNOTATED_CDS"/>
    <property type="molecule type" value="Genomic_DNA"/>
</dbReference>
<dbReference type="EMBL" id="X17403">
    <property type="protein sequence ID" value="CAA35418.1"/>
    <property type="molecule type" value="Genomic_DNA"/>
</dbReference>
<dbReference type="EMBL" id="BK000394">
    <property type="protein sequence ID" value="DAA00122.1"/>
    <property type="molecule type" value="Genomic_DNA"/>
</dbReference>
<dbReference type="PIR" id="S01566">
    <property type="entry name" value="S01566"/>
</dbReference>
<dbReference type="Proteomes" id="UP000008991">
    <property type="component" value="Segment"/>
</dbReference>
<dbReference type="Proteomes" id="UP000008992">
    <property type="component" value="Segment"/>
</dbReference>
<dbReference type="InterPro" id="IPR020504">
    <property type="entry name" value="DUF5500"/>
</dbReference>
<dbReference type="Pfam" id="PF17604">
    <property type="entry name" value="DUF5500"/>
    <property type="match status" value="1"/>
</dbReference>
<reference key="1">
    <citation type="journal article" date="1988" name="Nature">
        <title>Human cytomegalovirus encodes a glycoprotein homologous to MHC class-I antigens.</title>
        <authorList>
            <person name="Beck S."/>
            <person name="Barrell B.G."/>
        </authorList>
    </citation>
    <scope>NUCLEOTIDE SEQUENCE [GENOMIC DNA]</scope>
</reference>
<reference key="2">
    <citation type="journal article" date="1990" name="Curr. Top. Microbiol. Immunol.">
        <title>Analysis of the protein-coding content of the sequence of human cytomegalovirus strain AD169.</title>
        <authorList>
            <person name="Chee M.S."/>
            <person name="Bankier A.T."/>
            <person name="Beck S."/>
            <person name="Bohni R."/>
            <person name="Brown C.M."/>
            <person name="Cerny R."/>
            <person name="Horsnell T."/>
            <person name="Hutchison C.A. III"/>
            <person name="Kouzarides T."/>
            <person name="Martignetti J.A."/>
            <person name="Preddie E."/>
            <person name="Satchwell S.C."/>
            <person name="Tomlinson P."/>
            <person name="Weston K.M."/>
            <person name="Barrell B.G."/>
        </authorList>
    </citation>
    <scope>NUCLEOTIDE SEQUENCE [LARGE SCALE GENOMIC DNA]</scope>
</reference>
<reference key="3">
    <citation type="journal article" date="2003" name="J. Gen. Virol.">
        <title>The human cytomegalovirus genome revisited: comparison with the chimpanzee cytomegalovirus genome.</title>
        <authorList>
            <person name="Davison A.J."/>
            <person name="Dolan A."/>
            <person name="Akter P."/>
            <person name="Addison C."/>
            <person name="Dargan D.J."/>
            <person name="Alcendor D.J."/>
            <person name="McGeoch D.J."/>
            <person name="Hayward G.S."/>
        </authorList>
    </citation>
    <scope>GENOME REANNOTATION</scope>
</reference>
<reference key="4">
    <citation type="journal article" date="2003" name="J. Gen. Virol.">
        <authorList>
            <person name="Davison A.J."/>
            <person name="Dolan A."/>
            <person name="Akter P."/>
            <person name="Addison C."/>
            <person name="Dargan D.J."/>
            <person name="Alcendor D.J."/>
            <person name="McGeoch D.J."/>
            <person name="Hayward G.S."/>
        </authorList>
    </citation>
    <scope>ERRATUM OF PUBMED:12533697</scope>
</reference>
<protein>
    <recommendedName>
        <fullName>Uncharacterized protein UL19</fullName>
    </recommendedName>
</protein>